<protein>
    <recommendedName>
        <fullName evidence="1">Ribosomal protein bS6--L-glutamate ligase</fullName>
        <ecNumber evidence="1">6.3.2.-</ecNumber>
    </recommendedName>
    <alternativeName>
        <fullName evidence="1">Poly-alpha-glutamate synthase</fullName>
    </alternativeName>
    <alternativeName>
        <fullName evidence="1">Ribosomal protein bS6 modification protein</fullName>
    </alternativeName>
</protein>
<evidence type="ECO:0000255" key="1">
    <source>
        <dbReference type="HAMAP-Rule" id="MF_01552"/>
    </source>
</evidence>
<proteinExistence type="inferred from homology"/>
<sequence>MKIAILSRDGTLYSCKRLREAAMRRGHLVEILDPLSCYMNINPAASSIHYKGRRLPHFDAVIPRIGSAITFYGTAALRQFELLGSYPLNESVAITRARDKLRSLQLLARQGIDLPITGIAHSPDDTSDLIKMVGGAPLVVKLVEGTQGIGVVLAETRQAAESVIDAFRGLNAHILVQEYIAEAKGCDIRCLVVGNEVVAAIERCAKAGDFRSNLHRGGVASIATITPRERDIAIKAAQTLGLDVAGVDILRAARGPLVMEVNASPGLEGIEKTTGVDIAGRMIQWIERHATPEFCLKIGG</sequence>
<organism>
    <name type="scientific">Salmonella choleraesuis (strain SC-B67)</name>
    <dbReference type="NCBI Taxonomy" id="321314"/>
    <lineage>
        <taxon>Bacteria</taxon>
        <taxon>Pseudomonadati</taxon>
        <taxon>Pseudomonadota</taxon>
        <taxon>Gammaproteobacteria</taxon>
        <taxon>Enterobacterales</taxon>
        <taxon>Enterobacteriaceae</taxon>
        <taxon>Salmonella</taxon>
    </lineage>
</organism>
<keyword id="KW-0067">ATP-binding</keyword>
<keyword id="KW-0436">Ligase</keyword>
<keyword id="KW-0460">Magnesium</keyword>
<keyword id="KW-0464">Manganese</keyword>
<keyword id="KW-0479">Metal-binding</keyword>
<keyword id="KW-0547">Nucleotide-binding</keyword>
<keyword id="KW-0648">Protein biosynthesis</keyword>
<feature type="chain" id="PRO_0000205478" description="Ribosomal protein bS6--L-glutamate ligase">
    <location>
        <begin position="1"/>
        <end position="300"/>
    </location>
</feature>
<feature type="domain" description="ATP-grasp" evidence="1">
    <location>
        <begin position="104"/>
        <end position="287"/>
    </location>
</feature>
<feature type="binding site" evidence="1">
    <location>
        <position position="141"/>
    </location>
    <ligand>
        <name>ATP</name>
        <dbReference type="ChEBI" id="CHEBI:30616"/>
    </ligand>
</feature>
<feature type="binding site" evidence="1">
    <location>
        <begin position="178"/>
        <end position="179"/>
    </location>
    <ligand>
        <name>ATP</name>
        <dbReference type="ChEBI" id="CHEBI:30616"/>
    </ligand>
</feature>
<feature type="binding site" evidence="1">
    <location>
        <position position="187"/>
    </location>
    <ligand>
        <name>ATP</name>
        <dbReference type="ChEBI" id="CHEBI:30616"/>
    </ligand>
</feature>
<feature type="binding site" evidence="1">
    <location>
        <begin position="211"/>
        <end position="213"/>
    </location>
    <ligand>
        <name>ATP</name>
        <dbReference type="ChEBI" id="CHEBI:30616"/>
    </ligand>
</feature>
<feature type="binding site" evidence="1">
    <location>
        <position position="248"/>
    </location>
    <ligand>
        <name>Mg(2+)</name>
        <dbReference type="ChEBI" id="CHEBI:18420"/>
        <label>1</label>
    </ligand>
</feature>
<feature type="binding site" evidence="1">
    <location>
        <position position="248"/>
    </location>
    <ligand>
        <name>Mn(2+)</name>
        <dbReference type="ChEBI" id="CHEBI:29035"/>
        <label>1</label>
    </ligand>
</feature>
<feature type="binding site" evidence="1">
    <location>
        <position position="260"/>
    </location>
    <ligand>
        <name>Mg(2+)</name>
        <dbReference type="ChEBI" id="CHEBI:18420"/>
        <label>1</label>
    </ligand>
</feature>
<feature type="binding site" evidence="1">
    <location>
        <position position="260"/>
    </location>
    <ligand>
        <name>Mg(2+)</name>
        <dbReference type="ChEBI" id="CHEBI:18420"/>
        <label>2</label>
    </ligand>
</feature>
<feature type="binding site" evidence="1">
    <location>
        <position position="260"/>
    </location>
    <ligand>
        <name>Mn(2+)</name>
        <dbReference type="ChEBI" id="CHEBI:29035"/>
        <label>1</label>
    </ligand>
</feature>
<feature type="binding site" evidence="1">
    <location>
        <position position="260"/>
    </location>
    <ligand>
        <name>Mn(2+)</name>
        <dbReference type="ChEBI" id="CHEBI:29035"/>
        <label>2</label>
    </ligand>
</feature>
<feature type="binding site" evidence="1">
    <location>
        <position position="262"/>
    </location>
    <ligand>
        <name>Mg(2+)</name>
        <dbReference type="ChEBI" id="CHEBI:18420"/>
        <label>2</label>
    </ligand>
</feature>
<feature type="binding site" evidence="1">
    <location>
        <position position="262"/>
    </location>
    <ligand>
        <name>Mn(2+)</name>
        <dbReference type="ChEBI" id="CHEBI:29035"/>
        <label>2</label>
    </ligand>
</feature>
<name>RIMK_SALCH</name>
<gene>
    <name evidence="1" type="primary">rimK</name>
    <name type="ordered locus">SCH_0868</name>
</gene>
<comment type="function">
    <text evidence="1">An L-glutamate ligase that catalyzes the ATP-dependent post-translational addition of glutamate residues to the C-terminus of ribosomal protein bS6 (RpsF). Is also able to catalyze the synthesis of poly-alpha-glutamate in vitro, via ATP hydrolysis from unprotected glutamate as substrate. The number of glutamate residues added to either RpsF or to poly-alpha-glutamate changes with pH.</text>
</comment>
<comment type="cofactor">
    <cofactor evidence="1">
        <name>Mg(2+)</name>
        <dbReference type="ChEBI" id="CHEBI:18420"/>
    </cofactor>
    <cofactor evidence="1">
        <name>Mn(2+)</name>
        <dbReference type="ChEBI" id="CHEBI:29035"/>
    </cofactor>
    <text evidence="1">Binds 2 magnesium or manganese ions per subunit.</text>
</comment>
<comment type="similarity">
    <text evidence="1">Belongs to the RimK family.</text>
</comment>
<reference key="1">
    <citation type="journal article" date="2005" name="Nucleic Acids Res.">
        <title>The genome sequence of Salmonella enterica serovar Choleraesuis, a highly invasive and resistant zoonotic pathogen.</title>
        <authorList>
            <person name="Chiu C.-H."/>
            <person name="Tang P."/>
            <person name="Chu C."/>
            <person name="Hu S."/>
            <person name="Bao Q."/>
            <person name="Yu J."/>
            <person name="Chou Y.-Y."/>
            <person name="Wang H.-S."/>
            <person name="Lee Y.-S."/>
        </authorList>
    </citation>
    <scope>NUCLEOTIDE SEQUENCE [LARGE SCALE GENOMIC DNA]</scope>
    <source>
        <strain>SC-B67</strain>
    </source>
</reference>
<dbReference type="EC" id="6.3.2.-" evidence="1"/>
<dbReference type="EMBL" id="AE017220">
    <property type="protein sequence ID" value="AAX64774.1"/>
    <property type="molecule type" value="Genomic_DNA"/>
</dbReference>
<dbReference type="RefSeq" id="WP_000684361.1">
    <property type="nucleotide sequence ID" value="NC_006905.1"/>
</dbReference>
<dbReference type="SMR" id="Q57R87"/>
<dbReference type="KEGG" id="sec:SCH_0868"/>
<dbReference type="HOGENOM" id="CLU_054353_0_1_6"/>
<dbReference type="Proteomes" id="UP000000538">
    <property type="component" value="Chromosome"/>
</dbReference>
<dbReference type="GO" id="GO:0005737">
    <property type="term" value="C:cytoplasm"/>
    <property type="evidence" value="ECO:0007669"/>
    <property type="project" value="TreeGrafter"/>
</dbReference>
<dbReference type="GO" id="GO:0005524">
    <property type="term" value="F:ATP binding"/>
    <property type="evidence" value="ECO:0007669"/>
    <property type="project" value="UniProtKB-UniRule"/>
</dbReference>
<dbReference type="GO" id="GO:0046872">
    <property type="term" value="F:metal ion binding"/>
    <property type="evidence" value="ECO:0007669"/>
    <property type="project" value="UniProtKB-KW"/>
</dbReference>
<dbReference type="GO" id="GO:0018169">
    <property type="term" value="F:ribosomal S6-glutamic acid ligase activity"/>
    <property type="evidence" value="ECO:0007669"/>
    <property type="project" value="UniProtKB-UniRule"/>
</dbReference>
<dbReference type="GO" id="GO:0036211">
    <property type="term" value="P:protein modification process"/>
    <property type="evidence" value="ECO:0007669"/>
    <property type="project" value="InterPro"/>
</dbReference>
<dbReference type="GO" id="GO:0009432">
    <property type="term" value="P:SOS response"/>
    <property type="evidence" value="ECO:0007669"/>
    <property type="project" value="TreeGrafter"/>
</dbReference>
<dbReference type="GO" id="GO:0006412">
    <property type="term" value="P:translation"/>
    <property type="evidence" value="ECO:0007669"/>
    <property type="project" value="UniProtKB-KW"/>
</dbReference>
<dbReference type="FunFam" id="3.40.50.20:FF:000004">
    <property type="entry name" value="Probable alpha-L-glutamate ligase"/>
    <property type="match status" value="1"/>
</dbReference>
<dbReference type="FunFam" id="3.30.1490.20:FF:000005">
    <property type="entry name" value="Probable alpha-L-glutamate ligase 1"/>
    <property type="match status" value="1"/>
</dbReference>
<dbReference type="FunFam" id="3.30.470.20:FF:000016">
    <property type="entry name" value="Ribosomal protein S6--L-glutamate ligase"/>
    <property type="match status" value="1"/>
</dbReference>
<dbReference type="Gene3D" id="3.40.50.20">
    <property type="match status" value="1"/>
</dbReference>
<dbReference type="Gene3D" id="3.30.1490.20">
    <property type="entry name" value="ATP-grasp fold, A domain"/>
    <property type="match status" value="1"/>
</dbReference>
<dbReference type="Gene3D" id="3.30.470.20">
    <property type="entry name" value="ATP-grasp fold, B domain"/>
    <property type="match status" value="1"/>
</dbReference>
<dbReference type="HAMAP" id="MF_01552">
    <property type="entry name" value="RimK"/>
    <property type="match status" value="1"/>
</dbReference>
<dbReference type="InterPro" id="IPR011761">
    <property type="entry name" value="ATP-grasp"/>
</dbReference>
<dbReference type="InterPro" id="IPR013651">
    <property type="entry name" value="ATP-grasp_RimK-type"/>
</dbReference>
<dbReference type="InterPro" id="IPR013815">
    <property type="entry name" value="ATP_grasp_subdomain_1"/>
</dbReference>
<dbReference type="InterPro" id="IPR023533">
    <property type="entry name" value="RimK"/>
</dbReference>
<dbReference type="InterPro" id="IPR041107">
    <property type="entry name" value="Rimk_N"/>
</dbReference>
<dbReference type="InterPro" id="IPR004666">
    <property type="entry name" value="Rp_bS6_RimK/Lys_biosynth_LsyX"/>
</dbReference>
<dbReference type="NCBIfam" id="NF007764">
    <property type="entry name" value="PRK10446.1"/>
    <property type="match status" value="1"/>
</dbReference>
<dbReference type="NCBIfam" id="TIGR00768">
    <property type="entry name" value="rimK_fam"/>
    <property type="match status" value="1"/>
</dbReference>
<dbReference type="PANTHER" id="PTHR21621:SF7">
    <property type="entry name" value="RIBOSOMAL PROTEIN BS6--L-GLUTAMATE LIGASE"/>
    <property type="match status" value="1"/>
</dbReference>
<dbReference type="PANTHER" id="PTHR21621">
    <property type="entry name" value="RIBOSOMAL PROTEIN S6 MODIFICATION PROTEIN"/>
    <property type="match status" value="1"/>
</dbReference>
<dbReference type="Pfam" id="PF08443">
    <property type="entry name" value="RimK"/>
    <property type="match status" value="1"/>
</dbReference>
<dbReference type="Pfam" id="PF18030">
    <property type="entry name" value="Rimk_N"/>
    <property type="match status" value="1"/>
</dbReference>
<dbReference type="SUPFAM" id="SSF56059">
    <property type="entry name" value="Glutathione synthetase ATP-binding domain-like"/>
    <property type="match status" value="1"/>
</dbReference>
<dbReference type="PROSITE" id="PS50975">
    <property type="entry name" value="ATP_GRASP"/>
    <property type="match status" value="1"/>
</dbReference>
<accession>Q57R87</accession>